<organism>
    <name type="scientific">Human herpesvirus 6B (strain Z29)</name>
    <name type="common">HHV-6 variant B</name>
    <name type="synonym">Human B lymphotropic virus</name>
    <dbReference type="NCBI Taxonomy" id="36351"/>
    <lineage>
        <taxon>Viruses</taxon>
        <taxon>Duplodnaviria</taxon>
        <taxon>Heunggongvirae</taxon>
        <taxon>Peploviricota</taxon>
        <taxon>Herviviricetes</taxon>
        <taxon>Herpesvirales</taxon>
        <taxon>Orthoherpesviridae</taxon>
        <taxon>Betaherpesvirinae</taxon>
        <taxon>Roseolovirus</taxon>
        <taxon>Roseolovirus humanbeta6b</taxon>
        <taxon>Human herpesvirus 6B</taxon>
    </lineage>
</organism>
<dbReference type="EMBL" id="AF157706">
    <property type="protein sequence ID" value="AAD49627.1"/>
    <property type="molecule type" value="Genomic_DNA"/>
</dbReference>
<dbReference type="RefSeq" id="NP_050191.1">
    <property type="nucleotide sequence ID" value="NC_000898.1"/>
</dbReference>
<dbReference type="SMR" id="P0DTO9"/>
<dbReference type="GeneID" id="1497010"/>
<dbReference type="KEGG" id="vg:1497010"/>
<dbReference type="Proteomes" id="UP000006930">
    <property type="component" value="Segment"/>
</dbReference>
<dbReference type="InterPro" id="IPR007578">
    <property type="entry name" value="Herpes_U10"/>
</dbReference>
<dbReference type="Pfam" id="PF04489">
    <property type="entry name" value="DUF570"/>
    <property type="match status" value="1"/>
</dbReference>
<protein>
    <recommendedName>
        <fullName>Protein U10</fullName>
    </recommendedName>
</protein>
<accession>P0DTO9</accession>
<accession>Q77PV5</accession>
<accession>Q9WT54</accession>
<feature type="chain" id="PRO_0000408417" description="Protein U10">
    <location>
        <begin position="1"/>
        <end position="503"/>
    </location>
</feature>
<proteinExistence type="inferred from homology"/>
<sequence length="503" mass="57199">MEIVTYKTASARSPTVTWSSGFGRAIASIQKRHQENIRKPLRFYSGLLHCLIKQYEHCLVPPNKSIRFDKGKIEVAALILDLGHQVLGRQIHVRQRIYSWTSITLPKLFTPRELYFLVASPEDEDIVFNPTITKGGWISGSFSYPVEYRSNFSLTGMSANVLMVPFVPYRYPLNYARFISSIDLMILNEQFPEHECGDIQILKQRNYLYLGVIKNLTWKKSVTGTGQTAPHRILKASFIGSWPDTSLPDRVALRFFNNTRFTIHCHEFAINIENLGLVKNKEKVFGTLATVCCEQIPSLLTTENLPRYLIVQFEVVTQIEDPEPLLFSSNPKLYFTGDVLNATMQLQHNPNYYDLLVHAPYDIHFYPSRCHIVILPIRYFTRGDKQILISGYQNEGFFETQVMLWAPGTPLHITLRSFSPNLILPQSTPIATLFYVERMTSQNTEQKDVIAKLSENGHFIGNLKLPRENFLHHDAITDLSLAAIPKDSATPGPGTVSSSVSPS</sequence>
<evidence type="ECO:0000305" key="1"/>
<organismHost>
    <name type="scientific">Homo sapiens</name>
    <name type="common">Human</name>
    <dbReference type="NCBI Taxonomy" id="9606"/>
</organismHost>
<keyword id="KW-1185">Reference proteome</keyword>
<reference key="1">
    <citation type="journal article" date="1999" name="J. Virol.">
        <title>Human herpesvirus 6B genome sequence: coding content and comparison with human herpesvirus 6A.</title>
        <authorList>
            <person name="Dominguez G."/>
            <person name="Dambaugh T.R."/>
            <person name="Stamey F.R."/>
            <person name="Dewhurst S."/>
            <person name="Inoue N."/>
            <person name="Pellett P.E."/>
        </authorList>
    </citation>
    <scope>NUCLEOTIDE SEQUENCE [LARGE SCALE GENOMIC DNA]</scope>
</reference>
<name>U10_HHV6Z</name>
<gene>
    <name type="primary">U10</name>
</gene>
<comment type="similarity">
    <text evidence="1">Belongs to the herpesviridae U10 family.</text>
</comment>